<proteinExistence type="evidence at protein level"/>
<organism>
    <name type="scientific">Megalodesulfovibrio gigas</name>
    <name type="common">Desulfovibrio gigas</name>
    <dbReference type="NCBI Taxonomy" id="879"/>
    <lineage>
        <taxon>Bacteria</taxon>
        <taxon>Pseudomonadati</taxon>
        <taxon>Thermodesulfobacteriota</taxon>
        <taxon>Desulfovibrionia</taxon>
        <taxon>Desulfovibrionales</taxon>
        <taxon>Desulfovibrionaceae</taxon>
        <taxon>Megalodesulfovibrio</taxon>
    </lineage>
</organism>
<reference key="1">
    <citation type="journal article" date="1990" name="J. Bacteriol.">
        <title>The nucleotide sequence of the Desulfovibrio gigas desulforedoxin gene indicates that the Desulfovibrio vulgaris rbo gene originated from a gene fusion event.</title>
        <authorList>
            <person name="Brumlik M.J."/>
            <person name="Leroy G."/>
            <person name="Bruschi M."/>
            <person name="Voordouw G."/>
        </authorList>
    </citation>
    <scope>NUCLEOTIDE SEQUENCE [GENOMIC DNA]</scope>
</reference>
<reference key="2">
    <citation type="journal article" date="1979" name="Biochem. Biophys. Res. Commun.">
        <title>The amino acid sequence of desulforedoxin, a new type of non heme iron protein from Desulfovibrio gigas.</title>
        <authorList>
            <person name="Bruschi M."/>
            <person name="Moura I."/>
            <person name="le Gall J."/>
            <person name="Xavier A.V."/>
            <person name="Sieker L.C."/>
        </authorList>
    </citation>
    <scope>PROTEIN SEQUENCE OF 2-37</scope>
</reference>
<reference key="3">
    <citation type="journal article" date="1995" name="J. Mol. Biol.">
        <title>Crystal structure of desulforedoxin from Desulfovibrio gigas determined at 1.8-A resolution: a novel non-heme iron protein structure.</title>
        <authorList>
            <person name="Archer M."/>
            <person name="Huber R."/>
            <person name="Tavares P."/>
            <person name="Moura I."/>
            <person name="Moura J.J."/>
            <person name="Carrondo M.A."/>
            <person name="Sieker L.C."/>
            <person name="Legall J."/>
            <person name="Romao M.J."/>
        </authorList>
    </citation>
    <scope>X-RAY CRYSTALLOGRAPHY (1.8 ANGSTROMS)</scope>
</reference>
<reference key="4">
    <citation type="journal article" date="1999" name="Protein Sci.">
        <title>Structural studies by X-ray diffraction on metal substituted desulforedoxin, a rubredoxin-type protein.</title>
        <authorList>
            <person name="Archer M."/>
            <person name="Carvalho A.L."/>
            <person name="Teixeira S."/>
            <person name="Moura I."/>
            <person name="Moura J.J.G."/>
            <person name="Rusnak F."/>
            <person name="Romao M.J."/>
        </authorList>
    </citation>
    <scope>X-RAY CRYSTALLOGRAPHY (1.9 ANGSTROMS)</scope>
</reference>
<reference key="5">
    <citation type="journal article" date="1996" name="J. Biol. Inorg. Chem.">
        <title>The solution structure of desulforedoxin, a simple iron-sulfur protein. An NMR study of the zinc derivative.</title>
        <authorList>
            <person name="Goodfellow B.J."/>
            <person name="Tavares P."/>
            <person name="Romao M.J."/>
            <person name="Czaja C."/>
            <person name="Rusnak F."/>
            <person name="Legall J."/>
            <person name="Moura I."/>
            <person name="Moura J.J."/>
        </authorList>
    </citation>
    <scope>STRUCTURE BY NMR</scope>
</reference>
<reference key="6">
    <citation type="journal article" date="1998" name="Protein Sci.">
        <title>NMR determination of the global structure of the 113Cd derivative of desulforedoxin: investigation of the hydrogen bonding pattern at the metal center.</title>
        <authorList>
            <person name="Goodfellow B.J."/>
            <person name="Rusnak F."/>
            <person name="Moura I."/>
            <person name="Dommke T."/>
            <person name="Moura J.J."/>
        </authorList>
    </citation>
    <scope>STRUCTURE BY NMR</scope>
</reference>
<dbReference type="EMBL" id="M62784">
    <property type="protein sequence ID" value="AAA23365.1"/>
    <property type="molecule type" value="Genomic_DNA"/>
</dbReference>
<dbReference type="PIR" id="A37857">
    <property type="entry name" value="SDDVEG"/>
</dbReference>
<dbReference type="PDB" id="1CFW">
    <property type="method" value="X-ray"/>
    <property type="resolution" value="1.90 A"/>
    <property type="chains" value="A/B=2-37"/>
</dbReference>
<dbReference type="PDB" id="1DCD">
    <property type="method" value="X-ray"/>
    <property type="resolution" value="2.00 A"/>
    <property type="chains" value="A/B=2-37"/>
</dbReference>
<dbReference type="PDB" id="1DHG">
    <property type="method" value="X-ray"/>
    <property type="resolution" value="2.50 A"/>
    <property type="chains" value="A/B=2-37"/>
</dbReference>
<dbReference type="PDB" id="1DXG">
    <property type="method" value="X-ray"/>
    <property type="resolution" value="1.80 A"/>
    <property type="chains" value="A/B=2-37"/>
</dbReference>
<dbReference type="PDB" id="2LK5">
    <property type="method" value="NMR"/>
    <property type="chains" value="A/B=2-37"/>
</dbReference>
<dbReference type="PDB" id="2LK6">
    <property type="method" value="NMR"/>
    <property type="chains" value="A/B=2-37"/>
</dbReference>
<dbReference type="PDBsum" id="1CFW"/>
<dbReference type="PDBsum" id="1DCD"/>
<dbReference type="PDBsum" id="1DHG"/>
<dbReference type="PDBsum" id="1DXG"/>
<dbReference type="PDBsum" id="2LK5"/>
<dbReference type="PDBsum" id="2LK6"/>
<dbReference type="BMRB" id="P00273"/>
<dbReference type="SMR" id="P00273"/>
<dbReference type="EvolutionaryTrace" id="P00273"/>
<dbReference type="GO" id="GO:0005506">
    <property type="term" value="F:iron ion binding"/>
    <property type="evidence" value="ECO:0007669"/>
    <property type="project" value="InterPro"/>
</dbReference>
<dbReference type="Gene3D" id="2.20.28.100">
    <property type="entry name" value="Desulphoferrodoxin, N-terminal domain"/>
    <property type="match status" value="1"/>
</dbReference>
<dbReference type="InterPro" id="IPR004462">
    <property type="entry name" value="Desulfoferrodoxin_N"/>
</dbReference>
<dbReference type="InterPro" id="IPR038094">
    <property type="entry name" value="Desulfoferrodoxin_N_sf"/>
</dbReference>
<dbReference type="InterPro" id="IPR012002">
    <property type="entry name" value="Desulforedoxin"/>
</dbReference>
<dbReference type="NCBIfam" id="TIGR00319">
    <property type="entry name" value="desulf_FeS4"/>
    <property type="match status" value="1"/>
</dbReference>
<dbReference type="Pfam" id="PF06397">
    <property type="entry name" value="Desulfoferrod_N"/>
    <property type="match status" value="1"/>
</dbReference>
<dbReference type="PIRSF" id="PIRSF000075">
    <property type="entry name" value="Desulforedoxin"/>
    <property type="match status" value="1"/>
</dbReference>
<dbReference type="SUPFAM" id="SSF57802">
    <property type="entry name" value="Rubredoxin-like"/>
    <property type="match status" value="1"/>
</dbReference>
<evidence type="ECO:0000269" key="1">
    <source>
    </source>
</evidence>
<evidence type="ECO:0000305" key="2"/>
<evidence type="ECO:0007829" key="3">
    <source>
        <dbReference type="PDB" id="1DXG"/>
    </source>
</evidence>
<feature type="initiator methionine" description="Removed" evidence="1">
    <location>
        <position position="1"/>
    </location>
</feature>
<feature type="peptide" id="PRO_0000044734" description="Desulforedoxin">
    <location>
        <begin position="2"/>
        <end position="37"/>
    </location>
</feature>
<feature type="binding site">
    <location>
        <position position="10"/>
    </location>
    <ligand>
        <name>Fe cation</name>
        <dbReference type="ChEBI" id="CHEBI:24875"/>
    </ligand>
</feature>
<feature type="binding site">
    <location>
        <position position="13"/>
    </location>
    <ligand>
        <name>Fe cation</name>
        <dbReference type="ChEBI" id="CHEBI:24875"/>
    </ligand>
</feature>
<feature type="binding site">
    <location>
        <position position="29"/>
    </location>
    <ligand>
        <name>Fe cation</name>
        <dbReference type="ChEBI" id="CHEBI:24875"/>
    </ligand>
</feature>
<feature type="binding site">
    <location>
        <position position="30"/>
    </location>
    <ligand>
        <name>Fe cation</name>
        <dbReference type="ChEBI" id="CHEBI:24875"/>
    </ligand>
</feature>
<feature type="strand" evidence="3">
    <location>
        <begin position="7"/>
        <end position="9"/>
    </location>
</feature>
<feature type="turn" evidence="3">
    <location>
        <begin position="11"/>
        <end position="13"/>
    </location>
</feature>
<feature type="strand" evidence="3">
    <location>
        <begin position="16"/>
        <end position="21"/>
    </location>
</feature>
<feature type="strand" evidence="3">
    <location>
        <begin position="27"/>
        <end position="29"/>
    </location>
</feature>
<accession>P00273</accession>
<name>DESR_MEGGA</name>
<keyword id="KW-0002">3D-structure</keyword>
<keyword id="KW-0903">Direct protein sequencing</keyword>
<keyword id="KW-0249">Electron transport</keyword>
<keyword id="KW-0408">Iron</keyword>
<keyword id="KW-0479">Metal-binding</keyword>
<keyword id="KW-0813">Transport</keyword>
<gene>
    <name type="primary">dsr</name>
</gene>
<protein>
    <recommendedName>
        <fullName>Desulforedoxin</fullName>
        <shortName>DX</shortName>
    </recommendedName>
</protein>
<comment type="function">
    <text>Nonheme iron protein possibly involved in electron transport.</text>
</comment>
<comment type="cofactor">
    <cofactor>
        <name>Fe cation</name>
        <dbReference type="ChEBI" id="CHEBI:24875"/>
    </cofactor>
    <text>Binds 2 irons ions per subunit via 4 cysteine residues per iron.</text>
</comment>
<comment type="subunit">
    <text>Homodimer.</text>
</comment>
<comment type="similarity">
    <text evidence="2">To the N-terminal section of desulfoferrodoxin.</text>
</comment>
<sequence length="37" mass="3936">MANEGDVYKCELCGQVVKVLEEGGGTLVCCGEDMVKQ</sequence>